<comment type="function">
    <text evidence="1">Catalyzes the gamma-elimination of phosphate from L-phosphohomoserine and the beta-addition of water to produce L-threonine.</text>
</comment>
<comment type="catalytic activity">
    <reaction>
        <text>O-phospho-L-homoserine + H2O = L-threonine + phosphate</text>
        <dbReference type="Rhea" id="RHEA:10840"/>
        <dbReference type="ChEBI" id="CHEBI:15377"/>
        <dbReference type="ChEBI" id="CHEBI:43474"/>
        <dbReference type="ChEBI" id="CHEBI:57590"/>
        <dbReference type="ChEBI" id="CHEBI:57926"/>
        <dbReference type="EC" id="4.2.3.1"/>
    </reaction>
</comment>
<comment type="cofactor">
    <cofactor evidence="1">
        <name>pyridoxal 5'-phosphate</name>
        <dbReference type="ChEBI" id="CHEBI:597326"/>
    </cofactor>
</comment>
<comment type="pathway">
    <text>Amino-acid biosynthesis; L-threonine biosynthesis; L-threonine from L-aspartate: step 5/5.</text>
</comment>
<comment type="similarity">
    <text evidence="2">Belongs to the threonine synthase family.</text>
</comment>
<accession>P57289</accession>
<gene>
    <name type="primary">thrC</name>
    <name type="ordered locus">BU192</name>
</gene>
<proteinExistence type="inferred from homology"/>
<keyword id="KW-0028">Amino-acid biosynthesis</keyword>
<keyword id="KW-0456">Lyase</keyword>
<keyword id="KW-0663">Pyridoxal phosphate</keyword>
<keyword id="KW-1185">Reference proteome</keyword>
<keyword id="KW-0791">Threonine biosynthesis</keyword>
<name>THRC_BUCAI</name>
<evidence type="ECO:0000250" key="1"/>
<evidence type="ECO:0000305" key="2"/>
<protein>
    <recommendedName>
        <fullName>Threonine synthase</fullName>
        <shortName>TS</shortName>
        <ecNumber>4.2.3.1</ecNumber>
    </recommendedName>
</protein>
<organism>
    <name type="scientific">Buchnera aphidicola subsp. Acyrthosiphon pisum (strain APS)</name>
    <name type="common">Acyrthosiphon pisum symbiotic bacterium</name>
    <dbReference type="NCBI Taxonomy" id="107806"/>
    <lineage>
        <taxon>Bacteria</taxon>
        <taxon>Pseudomonadati</taxon>
        <taxon>Pseudomonadota</taxon>
        <taxon>Gammaproteobacteria</taxon>
        <taxon>Enterobacterales</taxon>
        <taxon>Erwiniaceae</taxon>
        <taxon>Buchnera</taxon>
    </lineage>
</organism>
<sequence length="429" mass="48660">MKLYNLKNHNEQVNFEAAVKLGLGQQQGLFFPVELPTITPIELSKILKMDFITRSTEILSKFICHEISKEELYKHVKQAFSFKHPLKIKITKDIHCFELFHGPTLAFKDFGARFMAQMILLLNKKNESVTILTATSGDTGAAVANAFYGMKNVRVIILYPKGKISELQEKLFCTLGRNIKTISINGSFDDCQKLVKEAFNDKKLKESIGLNSANSINISRLLAQICYYFEAFSLISEEQRKNLVIAVPCGNFGNLTAGLLSKSLGLPIKSFIACTNANDTVPRFLNNGTWNPKKTVSTISNAMDISQPNNWTRIEELFYRKKWDLKKLRFGSVSDHTTEETLKELFKLGYVSEPHAAIAYRLLRDQLKENEFGLFLGTAHPAKFKNTVEKILKNKISLPSELQNRIDLPLLSHNINPVFSKLKTFLLEK</sequence>
<feature type="chain" id="PRO_0000185627" description="Threonine synthase">
    <location>
        <begin position="1"/>
        <end position="429"/>
    </location>
</feature>
<feature type="modified residue" description="N6-(pyridoxal phosphate)lysine" evidence="1">
    <location>
        <position position="108"/>
    </location>
</feature>
<dbReference type="EC" id="4.2.3.1"/>
<dbReference type="EMBL" id="BA000003">
    <property type="protein sequence ID" value="BAB12909.1"/>
    <property type="molecule type" value="Genomic_DNA"/>
</dbReference>
<dbReference type="RefSeq" id="NP_240023.1">
    <property type="nucleotide sequence ID" value="NC_002528.1"/>
</dbReference>
<dbReference type="RefSeq" id="WP_009874149.1">
    <property type="nucleotide sequence ID" value="NZ_AP036055.1"/>
</dbReference>
<dbReference type="SMR" id="P57289"/>
<dbReference type="STRING" id="563178.BUAP5A_189"/>
<dbReference type="EnsemblBacteria" id="BAB12909">
    <property type="protein sequence ID" value="BAB12909"/>
    <property type="gene ID" value="BAB12909"/>
</dbReference>
<dbReference type="KEGG" id="buc:BU192"/>
<dbReference type="PATRIC" id="fig|107806.10.peg.203"/>
<dbReference type="eggNOG" id="COG0498">
    <property type="taxonomic scope" value="Bacteria"/>
</dbReference>
<dbReference type="HOGENOM" id="CLU_015170_0_0_6"/>
<dbReference type="UniPathway" id="UPA00050">
    <property type="reaction ID" value="UER00065"/>
</dbReference>
<dbReference type="Proteomes" id="UP000001806">
    <property type="component" value="Chromosome"/>
</dbReference>
<dbReference type="GO" id="GO:0030170">
    <property type="term" value="F:pyridoxal phosphate binding"/>
    <property type="evidence" value="ECO:0007669"/>
    <property type="project" value="InterPro"/>
</dbReference>
<dbReference type="GO" id="GO:0004795">
    <property type="term" value="F:threonine synthase activity"/>
    <property type="evidence" value="ECO:0007669"/>
    <property type="project" value="UniProtKB-EC"/>
</dbReference>
<dbReference type="GO" id="GO:0009088">
    <property type="term" value="P:threonine biosynthetic process"/>
    <property type="evidence" value="ECO:0007669"/>
    <property type="project" value="UniProtKB-UniPathway"/>
</dbReference>
<dbReference type="FunFam" id="3.40.50.1100:FF:000026">
    <property type="entry name" value="Threonine synthase"/>
    <property type="match status" value="1"/>
</dbReference>
<dbReference type="Gene3D" id="3.40.50.1100">
    <property type="match status" value="2"/>
</dbReference>
<dbReference type="Gene3D" id="3.90.1380.10">
    <property type="entry name" value="Threonine synthase, N-terminal domain"/>
    <property type="match status" value="1"/>
</dbReference>
<dbReference type="InterPro" id="IPR000634">
    <property type="entry name" value="Ser/Thr_deHydtase_PyrdxlP-BS"/>
</dbReference>
<dbReference type="InterPro" id="IPR029144">
    <property type="entry name" value="Thr_synth_N"/>
</dbReference>
<dbReference type="InterPro" id="IPR037158">
    <property type="entry name" value="Thr_synth_N_sf"/>
</dbReference>
<dbReference type="InterPro" id="IPR004450">
    <property type="entry name" value="Thr_synthase-like"/>
</dbReference>
<dbReference type="InterPro" id="IPR051166">
    <property type="entry name" value="Threonine_Synthase"/>
</dbReference>
<dbReference type="InterPro" id="IPR001926">
    <property type="entry name" value="TrpB-like_PALP"/>
</dbReference>
<dbReference type="InterPro" id="IPR036052">
    <property type="entry name" value="TrpB-like_PALP_sf"/>
</dbReference>
<dbReference type="NCBIfam" id="TIGR00260">
    <property type="entry name" value="thrC"/>
    <property type="match status" value="1"/>
</dbReference>
<dbReference type="PANTHER" id="PTHR42690">
    <property type="entry name" value="THREONINE SYNTHASE FAMILY MEMBER"/>
    <property type="match status" value="1"/>
</dbReference>
<dbReference type="PANTHER" id="PTHR42690:SF1">
    <property type="entry name" value="THREONINE SYNTHASE-LIKE 2"/>
    <property type="match status" value="1"/>
</dbReference>
<dbReference type="Pfam" id="PF00291">
    <property type="entry name" value="PALP"/>
    <property type="match status" value="1"/>
</dbReference>
<dbReference type="Pfam" id="PF14821">
    <property type="entry name" value="Thr_synth_N"/>
    <property type="match status" value="1"/>
</dbReference>
<dbReference type="SUPFAM" id="SSF53686">
    <property type="entry name" value="Tryptophan synthase beta subunit-like PLP-dependent enzymes"/>
    <property type="match status" value="1"/>
</dbReference>
<dbReference type="PROSITE" id="PS00165">
    <property type="entry name" value="DEHYDRATASE_SER_THR"/>
    <property type="match status" value="1"/>
</dbReference>
<reference key="1">
    <citation type="journal article" date="2000" name="Nature">
        <title>Genome sequence of the endocellular bacterial symbiont of aphids Buchnera sp. APS.</title>
        <authorList>
            <person name="Shigenobu S."/>
            <person name="Watanabe H."/>
            <person name="Hattori M."/>
            <person name="Sakaki Y."/>
            <person name="Ishikawa H."/>
        </authorList>
    </citation>
    <scope>NUCLEOTIDE SEQUENCE [LARGE SCALE GENOMIC DNA]</scope>
    <source>
        <strain>APS</strain>
    </source>
</reference>